<comment type="function">
    <text evidence="1 6 7 8">Acts as a transcriptional repressor. Binds to E-box sequences in the immunoglobulin heavy chain enhancer as well as in the regulatory regions of many other tissue-specific genes. Represses E-cadherin promoter and induces an epithelial-mesenchymal transition (EMT) by recruiting SMARCA4/BRG1. Represses BCL6 transcription in the presence of the corepressor CTBP1 (By similarity). Positively regulates neuronal differentiation. Represses RCOR1 transcription activation during neurogenesis. Represses transcription by binding to the E box (5'-CANNTG-3'). In the absence of TGFB1, acts as a repressor of COL1A2 transcription via binding to the E-box in the upstream enhancer region (PubMed:20713358). Promotes tumorigenicity by repressing stemness-inhibiting microRNAs (PubMed:19935649).</text>
</comment>
<comment type="subunit">
    <text evidence="2">Interacts (via N-terminus) with SMARCA4/BRG1.</text>
</comment>
<comment type="interaction">
    <interactant intactId="EBI-8560245">
        <id>Q64318</id>
    </interactant>
    <interactant intactId="EBI-604547">
        <id>O88712</id>
        <label>Ctbp1</label>
    </interactant>
    <organismsDiffer>false</organismsDiffer>
    <experiments>5</experiments>
</comment>
<comment type="subcellular location">
    <subcellularLocation>
        <location evidence="7">Nucleus</location>
    </subcellularLocation>
</comment>
<comment type="tissue specificity">
    <text evidence="7">Expressed in the external germinal layer (EGL) and internal granular layer (IGL) of the cerebellum (at protein level).</text>
</comment>
<comment type="induction">
    <text evidence="7">Induced during Neurod2-induced neurogenesis.</text>
</comment>
<comment type="PTM">
    <text evidence="2">Ubiquitinated, leading to degradation in a proteasome-dependent manner. Deubiquitinated by USP51, leading to stabilization.</text>
</comment>
<comment type="similarity">
    <text evidence="11">Belongs to the delta-EF1/ZFH-1 C2H2-type zinc-finger family.</text>
</comment>
<dbReference type="EMBL" id="U26259">
    <property type="protein sequence ID" value="AAA67564.1"/>
    <property type="molecule type" value="mRNA"/>
</dbReference>
<dbReference type="EMBL" id="D76432">
    <property type="protein sequence ID" value="BAA11177.1"/>
    <property type="molecule type" value="mRNA"/>
</dbReference>
<dbReference type="EMBL" id="L48363">
    <property type="protein sequence ID" value="AAB08442.1"/>
    <property type="molecule type" value="Genomic_DNA"/>
</dbReference>
<dbReference type="EMBL" id="BC139769">
    <property type="protein sequence ID" value="AAI39770.1"/>
    <property type="molecule type" value="mRNA"/>
</dbReference>
<dbReference type="CCDS" id="CCDS29039.1"/>
<dbReference type="PIR" id="JC4934">
    <property type="entry name" value="JC4934"/>
</dbReference>
<dbReference type="RefSeq" id="NP_035676.1">
    <property type="nucleotide sequence ID" value="NM_011546.3"/>
</dbReference>
<dbReference type="BioGRID" id="204010">
    <property type="interactions" value="21"/>
</dbReference>
<dbReference type="DIP" id="DIP-60280N"/>
<dbReference type="FunCoup" id="Q64318">
    <property type="interactions" value="3580"/>
</dbReference>
<dbReference type="IntAct" id="Q64318">
    <property type="interactions" value="4"/>
</dbReference>
<dbReference type="MINT" id="Q64318"/>
<dbReference type="STRING" id="10090.ENSMUSP00000025081"/>
<dbReference type="GlyGen" id="Q64318">
    <property type="glycosylation" value="2 sites, 1 N-linked glycan (1 site)"/>
</dbReference>
<dbReference type="iPTMnet" id="Q64318"/>
<dbReference type="PhosphoSitePlus" id="Q64318"/>
<dbReference type="jPOST" id="Q64318"/>
<dbReference type="PaxDb" id="10090-ENSMUSP00000025081"/>
<dbReference type="ProteomicsDB" id="302055"/>
<dbReference type="Pumba" id="Q64318"/>
<dbReference type="Antibodypedia" id="12930">
    <property type="antibodies" value="750 antibodies from 44 providers"/>
</dbReference>
<dbReference type="DNASU" id="21417"/>
<dbReference type="Ensembl" id="ENSMUST00000025081.13">
    <property type="protein sequence ID" value="ENSMUSP00000025081.6"/>
    <property type="gene ID" value="ENSMUSG00000024238.16"/>
</dbReference>
<dbReference type="GeneID" id="21417"/>
<dbReference type="KEGG" id="mmu:21417"/>
<dbReference type="UCSC" id="uc008dyy.2">
    <property type="organism name" value="mouse"/>
</dbReference>
<dbReference type="AGR" id="MGI:1344313"/>
<dbReference type="CTD" id="6935"/>
<dbReference type="MGI" id="MGI:1344313">
    <property type="gene designation" value="Zeb1"/>
</dbReference>
<dbReference type="VEuPathDB" id="HostDB:ENSMUSG00000024238"/>
<dbReference type="eggNOG" id="KOG3623">
    <property type="taxonomic scope" value="Eukaryota"/>
</dbReference>
<dbReference type="GeneTree" id="ENSGT00950000183208"/>
<dbReference type="HOGENOM" id="CLU_005890_0_1_1"/>
<dbReference type="InParanoid" id="Q64318"/>
<dbReference type="OMA" id="SYCKREP"/>
<dbReference type="OrthoDB" id="81693at9989"/>
<dbReference type="PhylomeDB" id="Q64318"/>
<dbReference type="TreeFam" id="TF331759"/>
<dbReference type="BioGRID-ORCS" id="21417">
    <property type="hits" value="4 hits in 77 CRISPR screens"/>
</dbReference>
<dbReference type="ChiTaRS" id="Zeb1">
    <property type="organism name" value="mouse"/>
</dbReference>
<dbReference type="PRO" id="PR:Q64318"/>
<dbReference type="Proteomes" id="UP000000589">
    <property type="component" value="Chromosome 18"/>
</dbReference>
<dbReference type="RNAct" id="Q64318">
    <property type="molecule type" value="protein"/>
</dbReference>
<dbReference type="Bgee" id="ENSMUSG00000024238">
    <property type="expression patterns" value="Expressed in meninx of diencephalon and 273 other cell types or tissues"/>
</dbReference>
<dbReference type="ExpressionAtlas" id="Q64318">
    <property type="expression patterns" value="baseline and differential"/>
</dbReference>
<dbReference type="GO" id="GO:0005829">
    <property type="term" value="C:cytosol"/>
    <property type="evidence" value="ECO:0007669"/>
    <property type="project" value="Ensembl"/>
</dbReference>
<dbReference type="GO" id="GO:0005654">
    <property type="term" value="C:nucleoplasm"/>
    <property type="evidence" value="ECO:0007669"/>
    <property type="project" value="Ensembl"/>
</dbReference>
<dbReference type="GO" id="GO:0005634">
    <property type="term" value="C:nucleus"/>
    <property type="evidence" value="ECO:0000314"/>
    <property type="project" value="UniProtKB"/>
</dbReference>
<dbReference type="GO" id="GO:0003682">
    <property type="term" value="F:chromatin binding"/>
    <property type="evidence" value="ECO:0000314"/>
    <property type="project" value="MGI"/>
</dbReference>
<dbReference type="GO" id="GO:0001227">
    <property type="term" value="F:DNA-binding transcription repressor activity, RNA polymerase II-specific"/>
    <property type="evidence" value="ECO:0000314"/>
    <property type="project" value="MGI"/>
</dbReference>
<dbReference type="GO" id="GO:0070888">
    <property type="term" value="F:E-box binding"/>
    <property type="evidence" value="ECO:0000314"/>
    <property type="project" value="UniProtKB"/>
</dbReference>
<dbReference type="GO" id="GO:0008270">
    <property type="term" value="F:zinc ion binding"/>
    <property type="evidence" value="ECO:0007669"/>
    <property type="project" value="UniProtKB-KW"/>
</dbReference>
<dbReference type="GO" id="GO:0048513">
    <property type="term" value="P:animal organ development"/>
    <property type="evidence" value="ECO:0000315"/>
    <property type="project" value="MGI"/>
</dbReference>
<dbReference type="GO" id="GO:0051216">
    <property type="term" value="P:cartilage development"/>
    <property type="evidence" value="ECO:0000315"/>
    <property type="project" value="MGI"/>
</dbReference>
<dbReference type="GO" id="GO:0030154">
    <property type="term" value="P:cell differentiation"/>
    <property type="evidence" value="ECO:0007669"/>
    <property type="project" value="UniProtKB-KW"/>
</dbReference>
<dbReference type="GO" id="GO:0008283">
    <property type="term" value="P:cell population proliferation"/>
    <property type="evidence" value="ECO:0000315"/>
    <property type="project" value="MGI"/>
</dbReference>
<dbReference type="GO" id="GO:0071230">
    <property type="term" value="P:cellular response to amino acid stimulus"/>
    <property type="evidence" value="ECO:0000314"/>
    <property type="project" value="MGI"/>
</dbReference>
<dbReference type="GO" id="GO:0007417">
    <property type="term" value="P:central nervous system development"/>
    <property type="evidence" value="ECO:0000316"/>
    <property type="project" value="MGI"/>
</dbReference>
<dbReference type="GO" id="GO:0090103">
    <property type="term" value="P:cochlea morphogenesis"/>
    <property type="evidence" value="ECO:0000315"/>
    <property type="project" value="MGI"/>
</dbReference>
<dbReference type="GO" id="GO:0048596">
    <property type="term" value="P:embryonic camera-type eye morphogenesis"/>
    <property type="evidence" value="ECO:0000315"/>
    <property type="project" value="MGI"/>
</dbReference>
<dbReference type="GO" id="GO:0048598">
    <property type="term" value="P:embryonic morphogenesis"/>
    <property type="evidence" value="ECO:0000316"/>
    <property type="project" value="MGI"/>
</dbReference>
<dbReference type="GO" id="GO:0048704">
    <property type="term" value="P:embryonic skeletal system morphogenesis"/>
    <property type="evidence" value="ECO:0000315"/>
    <property type="project" value="MGI"/>
</dbReference>
<dbReference type="GO" id="GO:0050673">
    <property type="term" value="P:epithelial cell proliferation"/>
    <property type="evidence" value="ECO:0000315"/>
    <property type="project" value="MGI"/>
</dbReference>
<dbReference type="GO" id="GO:0043616">
    <property type="term" value="P:keratinocyte proliferation"/>
    <property type="evidence" value="ECO:0000315"/>
    <property type="project" value="MGI"/>
</dbReference>
<dbReference type="GO" id="GO:0045892">
    <property type="term" value="P:negative regulation of DNA-templated transcription"/>
    <property type="evidence" value="ECO:0000314"/>
    <property type="project" value="UniProtKB"/>
</dbReference>
<dbReference type="GO" id="GO:0045602">
    <property type="term" value="P:negative regulation of endothelial cell differentiation"/>
    <property type="evidence" value="ECO:0007669"/>
    <property type="project" value="Ensembl"/>
</dbReference>
<dbReference type="GO" id="GO:0030857">
    <property type="term" value="P:negative regulation of epithelial cell differentiation"/>
    <property type="evidence" value="ECO:0000315"/>
    <property type="project" value="MGI"/>
</dbReference>
<dbReference type="GO" id="GO:0050680">
    <property type="term" value="P:negative regulation of epithelial cell proliferation"/>
    <property type="evidence" value="ECO:0000315"/>
    <property type="project" value="MGI"/>
</dbReference>
<dbReference type="GO" id="GO:0010839">
    <property type="term" value="P:negative regulation of keratinocyte proliferation"/>
    <property type="evidence" value="ECO:0000315"/>
    <property type="project" value="MGI"/>
</dbReference>
<dbReference type="GO" id="GO:0000122">
    <property type="term" value="P:negative regulation of transcription by RNA polymerase II"/>
    <property type="evidence" value="ECO:0000314"/>
    <property type="project" value="UniProtKB"/>
</dbReference>
<dbReference type="GO" id="GO:0007389">
    <property type="term" value="P:pattern specification process"/>
    <property type="evidence" value="ECO:0000315"/>
    <property type="project" value="MGI"/>
</dbReference>
<dbReference type="GO" id="GO:0045666">
    <property type="term" value="P:positive regulation of neuron differentiation"/>
    <property type="evidence" value="ECO:0000314"/>
    <property type="project" value="UniProtKB"/>
</dbReference>
<dbReference type="GO" id="GO:0045944">
    <property type="term" value="P:positive regulation of transcription by RNA polymerase II"/>
    <property type="evidence" value="ECO:0000314"/>
    <property type="project" value="MGI"/>
</dbReference>
<dbReference type="GO" id="GO:0010464">
    <property type="term" value="P:regulation of mesenchymal cell proliferation"/>
    <property type="evidence" value="ECO:0000315"/>
    <property type="project" value="MGI"/>
</dbReference>
<dbReference type="GO" id="GO:0051150">
    <property type="term" value="P:regulation of smooth muscle cell differentiation"/>
    <property type="evidence" value="ECO:0000315"/>
    <property type="project" value="MGI"/>
</dbReference>
<dbReference type="GO" id="GO:0033081">
    <property type="term" value="P:regulation of T cell differentiation in thymus"/>
    <property type="evidence" value="ECO:0000315"/>
    <property type="project" value="MGI"/>
</dbReference>
<dbReference type="GO" id="GO:0017015">
    <property type="term" value="P:regulation of transforming growth factor beta receptor signaling pathway"/>
    <property type="evidence" value="ECO:0000316"/>
    <property type="project" value="MGI"/>
</dbReference>
<dbReference type="GO" id="GO:0048752">
    <property type="term" value="P:semicircular canal morphogenesis"/>
    <property type="evidence" value="ECO:0000315"/>
    <property type="project" value="MGI"/>
</dbReference>
<dbReference type="FunFam" id="3.30.160.60:FF:000013">
    <property type="entry name" value="Putative zinc finger E-box-binding homeobox 2"/>
    <property type="match status" value="2"/>
</dbReference>
<dbReference type="FunFam" id="3.30.160.60:FF:000082">
    <property type="entry name" value="Putative zinc finger E-box-binding homeobox 2"/>
    <property type="match status" value="1"/>
</dbReference>
<dbReference type="FunFam" id="1.10.10.60:FF:000122">
    <property type="entry name" value="Zinc finger E-box binding homeobox 1"/>
    <property type="match status" value="1"/>
</dbReference>
<dbReference type="FunFam" id="3.30.160.60:FF:000744">
    <property type="entry name" value="zinc finger E-box-binding homeobox 1"/>
    <property type="match status" value="1"/>
</dbReference>
<dbReference type="FunFam" id="3.30.160.60:FF:000117">
    <property type="entry name" value="Zinc finger E-box-binding homeobox 2 isoform 1"/>
    <property type="match status" value="1"/>
</dbReference>
<dbReference type="FunFam" id="3.30.160.60:FF:000145">
    <property type="entry name" value="Zinc finger protein 574"/>
    <property type="match status" value="1"/>
</dbReference>
<dbReference type="Gene3D" id="3.30.160.60">
    <property type="entry name" value="Classic Zinc Finger"/>
    <property type="match status" value="6"/>
</dbReference>
<dbReference type="Gene3D" id="1.10.10.60">
    <property type="entry name" value="Homeodomain-like"/>
    <property type="match status" value="1"/>
</dbReference>
<dbReference type="InterPro" id="IPR008598">
    <property type="entry name" value="Di19_Zn-bd"/>
</dbReference>
<dbReference type="InterPro" id="IPR009057">
    <property type="entry name" value="Homeodomain-like_sf"/>
</dbReference>
<dbReference type="InterPro" id="IPR036236">
    <property type="entry name" value="Znf_C2H2_sf"/>
</dbReference>
<dbReference type="InterPro" id="IPR013087">
    <property type="entry name" value="Znf_C2H2_type"/>
</dbReference>
<dbReference type="InterPro" id="IPR051574">
    <property type="entry name" value="ZnF_E-box_Homeobox"/>
</dbReference>
<dbReference type="PANTHER" id="PTHR24391">
    <property type="entry name" value="HISTONE H4 TRANSCRIPTION FACTOR-RELATED"/>
    <property type="match status" value="1"/>
</dbReference>
<dbReference type="PANTHER" id="PTHR24391:SF17">
    <property type="entry name" value="ZINC FINGER E-BOX-BINDING HOMEOBOX 1"/>
    <property type="match status" value="1"/>
</dbReference>
<dbReference type="Pfam" id="PF00096">
    <property type="entry name" value="zf-C2H2"/>
    <property type="match status" value="4"/>
</dbReference>
<dbReference type="Pfam" id="PF05605">
    <property type="entry name" value="zf-Di19"/>
    <property type="match status" value="1"/>
</dbReference>
<dbReference type="SMART" id="SM00355">
    <property type="entry name" value="ZnF_C2H2"/>
    <property type="match status" value="7"/>
</dbReference>
<dbReference type="SUPFAM" id="SSF57667">
    <property type="entry name" value="beta-beta-alpha zinc fingers"/>
    <property type="match status" value="4"/>
</dbReference>
<dbReference type="SUPFAM" id="SSF46689">
    <property type="entry name" value="Homeodomain-like"/>
    <property type="match status" value="1"/>
</dbReference>
<dbReference type="PROSITE" id="PS00028">
    <property type="entry name" value="ZINC_FINGER_C2H2_1"/>
    <property type="match status" value="5"/>
</dbReference>
<dbReference type="PROSITE" id="PS50157">
    <property type="entry name" value="ZINC_FINGER_C2H2_2"/>
    <property type="match status" value="6"/>
</dbReference>
<accession>Q64318</accession>
<accession>A4QPD2</accession>
<accession>Q62519</accession>
<name>ZEB1_MOUSE</name>
<gene>
    <name evidence="12" type="primary">Zeb1</name>
    <name evidence="12" type="synonym">Areb6</name>
    <name evidence="12" type="synonym">Tcf8</name>
    <name evidence="12" type="synonym">Zfhx1a</name>
    <name evidence="12" type="synonym">Zfx1a</name>
    <name type="synonym">Zfx1ha</name>
</gene>
<organism>
    <name type="scientific">Mus musculus</name>
    <name type="common">Mouse</name>
    <dbReference type="NCBI Taxonomy" id="10090"/>
    <lineage>
        <taxon>Eukaryota</taxon>
        <taxon>Metazoa</taxon>
        <taxon>Chordata</taxon>
        <taxon>Craniata</taxon>
        <taxon>Vertebrata</taxon>
        <taxon>Euteleostomi</taxon>
        <taxon>Mammalia</taxon>
        <taxon>Eutheria</taxon>
        <taxon>Euarchontoglires</taxon>
        <taxon>Glires</taxon>
        <taxon>Rodentia</taxon>
        <taxon>Myomorpha</taxon>
        <taxon>Muroidea</taxon>
        <taxon>Muridae</taxon>
        <taxon>Murinae</taxon>
        <taxon>Mus</taxon>
        <taxon>Mus</taxon>
    </lineage>
</organism>
<reference key="1">
    <citation type="journal article" date="1996" name="Gene">
        <title>Organization of the gene encoding transcriptional repressor deltaEF1 and cross-species conservation of its domains.</title>
        <authorList>
            <person name="Sekido R."/>
            <person name="Takagi T."/>
            <person name="Okanami M."/>
            <person name="Moribe H."/>
            <person name="Yamamura M."/>
            <person name="Higashi Y."/>
            <person name="Kondoh H."/>
        </authorList>
    </citation>
    <scope>NUCLEOTIDE SEQUENCE [MRNA]</scope>
    <source>
        <strain>C57BL/6J</strain>
        <tissue>Embryo</tissue>
    </source>
</reference>
<reference key="2">
    <citation type="submission" date="1995-05" db="EMBL/GenBank/DDBJ databases">
        <authorList>
            <person name="Wu Y."/>
            <person name="Montoya G.D."/>
            <person name="Rubin S.E."/>
            <person name="Brodie S.G."/>
            <person name="Jenkins N."/>
            <person name="Williams T.M."/>
        </authorList>
    </citation>
    <scope>NUCLEOTIDE SEQUENCE</scope>
    <source>
        <tissue>Spleen</tissue>
    </source>
</reference>
<reference key="3">
    <citation type="journal article" date="1996" name="Gene">
        <title>Cloning of a cDNA encoding a mouse transcriptional repressor displaying striking sequence conservation across vertebrates.</title>
        <authorList>
            <person name="Genetta T."/>
            <person name="Kadesch T."/>
        </authorList>
    </citation>
    <scope>NUCLEOTIDE SEQUENCE [GENOMIC DNA]</scope>
    <source>
        <tissue>Brain</tissue>
    </source>
</reference>
<reference key="4">
    <citation type="journal article" date="2004" name="Genome Res.">
        <title>The status, quality, and expansion of the NIH full-length cDNA project: the Mammalian Gene Collection (MGC).</title>
        <authorList>
            <consortium name="The MGC Project Team"/>
        </authorList>
    </citation>
    <scope>NUCLEOTIDE SEQUENCE [LARGE SCALE MRNA]</scope>
</reference>
<reference key="5">
    <citation type="journal article" date="2009" name="Nat. Cell Biol.">
        <title>The EMT-activator ZEB1 promotes tumorigenicity by repressing stemness-inhibiting microRNAs.</title>
        <authorList>
            <person name="Wellner U."/>
            <person name="Schubert J."/>
            <person name="Burk U.C."/>
            <person name="Schmalhofer O."/>
            <person name="Zhu F."/>
            <person name="Sonntag A."/>
            <person name="Waldvogel B."/>
            <person name="Vannier C."/>
            <person name="Darling D."/>
            <person name="zur Hausen A."/>
            <person name="Brunton V.G."/>
            <person name="Morton J."/>
            <person name="Sansom O."/>
            <person name="Schuler J."/>
            <person name="Stemmler M.P."/>
            <person name="Herzberger C."/>
            <person name="Hopt U."/>
            <person name="Keck T."/>
            <person name="Brabletz S."/>
            <person name="Brabletz T."/>
        </authorList>
    </citation>
    <scope>FUNCTION</scope>
</reference>
<reference key="6">
    <citation type="journal article" date="2010" name="Cell">
        <title>A tissue-specific atlas of mouse protein phosphorylation and expression.</title>
        <authorList>
            <person name="Huttlin E.L."/>
            <person name="Jedrychowski M.P."/>
            <person name="Elias J.E."/>
            <person name="Goswami T."/>
            <person name="Rad R."/>
            <person name="Beausoleil S.A."/>
            <person name="Villen J."/>
            <person name="Haas W."/>
            <person name="Sowa M.E."/>
            <person name="Gygi S.P."/>
        </authorList>
    </citation>
    <scope>PHOSPHORYLATION [LARGE SCALE ANALYSIS] AT SER-293; SER-302; SER-657; SER-664; SER-671; SER-678 AND SER-682</scope>
    <scope>IDENTIFICATION BY MASS SPECTROMETRY [LARGE SCALE ANALYSIS]</scope>
    <source>
        <tissue>Brain</tissue>
        <tissue>Brown adipose tissue</tissue>
        <tissue>Heart</tissue>
        <tissue>Kidney</tissue>
        <tissue>Liver</tissue>
        <tissue>Lung</tissue>
        <tissue>Spleen</tissue>
        <tissue>Testis</tissue>
    </source>
</reference>
<reference key="7">
    <citation type="journal article" date="2010" name="J. Biol. Chem.">
        <title>Post-transcriptional up-regulation of Tsc-22 by Ybx1, a target of miR-216a, mediates TGF-{beta}-induced collagen expression in kidney cells.</title>
        <authorList>
            <person name="Kato M."/>
            <person name="Wang L."/>
            <person name="Putta S."/>
            <person name="Wang M."/>
            <person name="Yuan H."/>
            <person name="Sun G."/>
            <person name="Lanting L."/>
            <person name="Todorov I."/>
            <person name="Rossi J.J."/>
            <person name="Natarajan R."/>
        </authorList>
    </citation>
    <scope>FUNCTION</scope>
</reference>
<reference key="8">
    <citation type="journal article" date="2010" name="Mol. Cell. Neurosci.">
        <title>Transcriptional inhibition of REST by NeuroD2 during neuronal differentiation.</title>
        <authorList>
            <person name="Ravanpay A.C."/>
            <person name="Hansen S.J."/>
            <person name="Olson J.M."/>
        </authorList>
    </citation>
    <scope>FUNCTION</scope>
    <scope>DNA-BINDING</scope>
    <scope>INDUCTION BY NEUROGENESIS</scope>
    <scope>SUBCELLULAR LOCATION</scope>
    <scope>TISSUE SPECIFICITY</scope>
</reference>
<feature type="chain" id="PRO_0000047233" description="Zinc finger E-box-binding homeobox 1">
    <location>
        <begin position="1"/>
        <end position="1117"/>
    </location>
</feature>
<feature type="zinc finger region" description="C2H2-type 1" evidence="4">
    <location>
        <begin position="150"/>
        <end position="173"/>
    </location>
</feature>
<feature type="zinc finger region" description="C2H2-type 2" evidence="4">
    <location>
        <begin position="180"/>
        <end position="202"/>
    </location>
</feature>
<feature type="zinc finger region" description="C2H2-type 3" evidence="4">
    <location>
        <begin position="220"/>
        <end position="242"/>
    </location>
</feature>
<feature type="zinc finger region" description="C2H2-type 4; atypical" evidence="4">
    <location>
        <begin position="248"/>
        <end position="272"/>
    </location>
</feature>
<feature type="DNA-binding region" description="Homeobox; atypical">
    <location>
        <begin position="559"/>
        <end position="618"/>
    </location>
</feature>
<feature type="zinc finger region" description="C2H2-type 5" evidence="4">
    <location>
        <begin position="882"/>
        <end position="904"/>
    </location>
</feature>
<feature type="zinc finger region" description="C2H2-type 6" evidence="4">
    <location>
        <begin position="910"/>
        <end position="932"/>
    </location>
</feature>
<feature type="zinc finger region" description="C2H2-type 7; atypical" evidence="4">
    <location>
        <begin position="938"/>
        <end position="959"/>
    </location>
</feature>
<feature type="region of interest" description="Disordered" evidence="5">
    <location>
        <begin position="1"/>
        <end position="103"/>
    </location>
</feature>
<feature type="region of interest" description="Disordered" evidence="5">
    <location>
        <begin position="122"/>
        <end position="143"/>
    </location>
</feature>
<feature type="region of interest" description="Disordered" evidence="5">
    <location>
        <begin position="278"/>
        <end position="307"/>
    </location>
</feature>
<feature type="region of interest" description="Disordered" evidence="5">
    <location>
        <begin position="476"/>
        <end position="501"/>
    </location>
</feature>
<feature type="region of interest" description="Disordered" evidence="5">
    <location>
        <begin position="528"/>
        <end position="566"/>
    </location>
</feature>
<feature type="region of interest" description="Disordered" evidence="5">
    <location>
        <begin position="613"/>
        <end position="687"/>
    </location>
</feature>
<feature type="region of interest" description="Disordered" evidence="5">
    <location>
        <begin position="834"/>
        <end position="876"/>
    </location>
</feature>
<feature type="region of interest" description="Disordered" evidence="5">
    <location>
        <begin position="991"/>
        <end position="1117"/>
    </location>
</feature>
<feature type="compositionally biased region" description="Low complexity" evidence="5">
    <location>
        <begin position="15"/>
        <end position="30"/>
    </location>
</feature>
<feature type="compositionally biased region" description="Low complexity" evidence="5">
    <location>
        <begin position="288"/>
        <end position="304"/>
    </location>
</feature>
<feature type="compositionally biased region" description="Basic and acidic residues" evidence="5">
    <location>
        <begin position="484"/>
        <end position="501"/>
    </location>
</feature>
<feature type="compositionally biased region" description="Polar residues" evidence="5">
    <location>
        <begin position="673"/>
        <end position="687"/>
    </location>
</feature>
<feature type="compositionally biased region" description="Polar residues" evidence="5">
    <location>
        <begin position="852"/>
        <end position="868"/>
    </location>
</feature>
<feature type="compositionally biased region" description="Acidic residues" evidence="5">
    <location>
        <begin position="1013"/>
        <end position="1032"/>
    </location>
</feature>
<feature type="compositionally biased region" description="Acidic residues" evidence="5">
    <location>
        <begin position="1042"/>
        <end position="1069"/>
    </location>
</feature>
<feature type="compositionally biased region" description="Acidic residues" evidence="5">
    <location>
        <begin position="1098"/>
        <end position="1109"/>
    </location>
</feature>
<feature type="modified residue" description="Phosphoserine" evidence="3">
    <location>
        <position position="31"/>
    </location>
</feature>
<feature type="modified residue" description="Phosphoserine" evidence="3">
    <location>
        <position position="33"/>
    </location>
</feature>
<feature type="modified residue" description="Phosphoserine" evidence="13">
    <location>
        <position position="293"/>
    </location>
</feature>
<feature type="modified residue" description="Phosphoserine" evidence="13">
    <location>
        <position position="302"/>
    </location>
</feature>
<feature type="modified residue" description="Phosphoserine" evidence="13">
    <location>
        <position position="657"/>
    </location>
</feature>
<feature type="modified residue" description="Phosphoserine" evidence="13">
    <location>
        <position position="664"/>
    </location>
</feature>
<feature type="modified residue" description="Phosphoserine" evidence="13">
    <location>
        <position position="671"/>
    </location>
</feature>
<feature type="modified residue" description="Phosphoserine" evidence="13">
    <location>
        <position position="678"/>
    </location>
</feature>
<feature type="modified residue" description="Phosphothreonine" evidence="2">
    <location>
        <position position="680"/>
    </location>
</feature>
<feature type="modified residue" description="Phosphoserine" evidence="13">
    <location>
        <position position="682"/>
    </location>
</feature>
<feature type="cross-link" description="Glycyl lysine isopeptide (Lys-Gly) (interchain with G-Cter in SUMO2)" evidence="2">
    <location>
        <position position="166"/>
    </location>
</feature>
<feature type="cross-link" description="Glycyl lysine isopeptide (Lys-Gly) (interchain with G-Cter in SUMO2)" evidence="2">
    <location>
        <position position="175"/>
    </location>
</feature>
<feature type="cross-link" description="Glycyl lysine isopeptide (Lys-Gly) (interchain with G-Cter in SUMO2)" evidence="2">
    <location>
        <position position="287"/>
    </location>
</feature>
<feature type="cross-link" description="Glycyl lysine isopeptide (Lys-Gly) (interchain with G-Cter in SUMO2)" evidence="2">
    <location>
        <position position="311"/>
    </location>
</feature>
<feature type="cross-link" description="Glycyl lysine isopeptide (Lys-Gly) (interchain with G-Cter in SUMO2)" evidence="2">
    <location>
        <position position="315"/>
    </location>
</feature>
<feature type="cross-link" description="Glycyl lysine isopeptide (Lys-Gly) (interchain with G-Cter in SUMO); alternate" evidence="1">
    <location>
        <position position="327"/>
    </location>
</feature>
<feature type="cross-link" description="Glycyl lysine isopeptide (Lys-Gly) (interchain with G-Cter in SUMO2); alternate" evidence="2">
    <location>
        <position position="327"/>
    </location>
</feature>
<feature type="cross-link" description="Glycyl lysine isopeptide (Lys-Gly) (interchain with G-Cter in SUMO2)" evidence="2">
    <location>
        <position position="419"/>
    </location>
</feature>
<feature type="cross-link" description="Glycyl lysine isopeptide (Lys-Gly) (interchain with G-Cter in SUMO2)" evidence="2">
    <location>
        <position position="473"/>
    </location>
</feature>
<feature type="cross-link" description="Glycyl lysine isopeptide (Lys-Gly) (interchain with G-Cter in SUMO2)" evidence="2">
    <location>
        <position position="484"/>
    </location>
</feature>
<feature type="cross-link" description="Glycyl lysine isopeptide (Lys-Gly) (interchain with G-Cter in SUMO2)" evidence="2">
    <location>
        <position position="495"/>
    </location>
</feature>
<feature type="cross-link" description="Glycyl lysine isopeptide (Lys-Gly) (interchain with G-Cter in SUMO2)" evidence="2">
    <location>
        <position position="528"/>
    </location>
</feature>
<feature type="cross-link" description="Glycyl lysine isopeptide (Lys-Gly) (interchain with G-Cter in SUMO); alternate" evidence="1">
    <location>
        <position position="752"/>
    </location>
</feature>
<feature type="cross-link" description="Glycyl lysine isopeptide (Lys-Gly) (interchain with G-Cter in SUMO2); alternate" evidence="2">
    <location>
        <position position="752"/>
    </location>
</feature>
<feature type="sequence conflict" description="In Ref. 3; AAB08442." evidence="11" ref="3">
    <original>S</original>
    <variation>A</variation>
    <location>
        <position position="33"/>
    </location>
</feature>
<feature type="sequence conflict" description="In Ref. 3; AAB08442." evidence="11" ref="3">
    <original>M</original>
    <variation>K</variation>
    <location>
        <position position="57"/>
    </location>
</feature>
<feature type="sequence conflict" description="In Ref. 3; AAB08442." evidence="11" ref="3">
    <location>
        <position position="125"/>
    </location>
</feature>
<feature type="sequence conflict" description="In Ref. 3; AAB08442." evidence="11" ref="3">
    <original>F</original>
    <variation>L</variation>
    <location>
        <position position="146"/>
    </location>
</feature>
<feature type="sequence conflict" description="In Ref. 3; AAB08442." evidence="11" ref="3">
    <original>E</original>
    <variation>EV</variation>
    <location>
        <position position="313"/>
    </location>
</feature>
<feature type="sequence conflict" description="In Ref. 3; AAB08442." evidence="11" ref="3">
    <original>G</original>
    <variation>A</variation>
    <location>
        <position position="353"/>
    </location>
</feature>
<feature type="sequence conflict" description="In Ref. 3; AAB08442." evidence="11" ref="3">
    <original>V</original>
    <variation>L</variation>
    <location>
        <position position="400"/>
    </location>
</feature>
<feature type="sequence conflict" description="In Ref. 3; AAB08442." evidence="11" ref="3">
    <original>Q</original>
    <variation>E</variation>
    <location>
        <position position="461"/>
    </location>
</feature>
<feature type="sequence conflict" description="In Ref. 3; AAB08442." evidence="11" ref="3">
    <original>K</original>
    <variation>KK</variation>
    <location>
        <position position="528"/>
    </location>
</feature>
<feature type="sequence conflict" description="In Ref. 3; AAB08442." evidence="11" ref="3">
    <original>S</original>
    <variation>T</variation>
    <location>
        <position position="664"/>
    </location>
</feature>
<feature type="sequence conflict" description="In Ref. 3; AAB08442." evidence="11" ref="3">
    <original>E</original>
    <variation>L</variation>
    <location>
        <position position="744"/>
    </location>
</feature>
<feature type="sequence conflict" description="In Ref. 3; AAB08442." evidence="11" ref="3">
    <original>T</original>
    <variation>A</variation>
    <location>
        <position position="822"/>
    </location>
</feature>
<feature type="sequence conflict" description="In Ref. 3; AAB08442." evidence="11" ref="3">
    <location>
        <position position="1062"/>
    </location>
</feature>
<keyword id="KW-0010">Activator</keyword>
<keyword id="KW-0221">Differentiation</keyword>
<keyword id="KW-0238">DNA-binding</keyword>
<keyword id="KW-0371">Homeobox</keyword>
<keyword id="KW-1017">Isopeptide bond</keyword>
<keyword id="KW-0479">Metal-binding</keyword>
<keyword id="KW-0524">Neurogenesis</keyword>
<keyword id="KW-0539">Nucleus</keyword>
<keyword id="KW-0597">Phosphoprotein</keyword>
<keyword id="KW-1185">Reference proteome</keyword>
<keyword id="KW-0677">Repeat</keyword>
<keyword id="KW-0678">Repressor</keyword>
<keyword id="KW-0804">Transcription</keyword>
<keyword id="KW-0805">Transcription regulation</keyword>
<keyword id="KW-0832">Ubl conjugation</keyword>
<keyword id="KW-0862">Zinc</keyword>
<keyword id="KW-0863">Zinc-finger</keyword>
<protein>
    <recommendedName>
        <fullName evidence="12">Zinc finger E-box-binding homeobox 1</fullName>
    </recommendedName>
    <alternativeName>
        <fullName evidence="10">Delta EF1</fullName>
    </alternativeName>
    <alternativeName>
        <fullName evidence="2">Transcription factor 8</fullName>
        <shortName evidence="2">TCF-8</shortName>
    </alternativeName>
    <alternativeName>
        <fullName>Zinc finger homeobox protein 1a</fullName>
        <shortName evidence="9">MEB1</shortName>
    </alternativeName>
</protein>
<proteinExistence type="evidence at protein level"/>
<sequence>MADGPRCKRRKQANPRRNNVTNYNTVVEANSDSDDEDKLHIVEEESITDAADCEGGMPDDELPADQTVLPGGSDRGGGAKNCWQDNVKDNECDSDAENEQNHDPNVEEFLQQQDTAVIYPEAPEEDQRQGTPEASSHDENGTPDAFSQLLTCPYCDRGYKRFTSLKEHIKYRHEKNEDNFSCSLCSYTFAYRTQLERHMTSHKSGREQRHVTQSGGNRKFKCTECGKAFKYKHHLKEHLRIHSGEKPYECPNCKKRFSHSGSYSSHISSKKCISLMPVNGRPRSGLKTSQCSSPSLSTSPGSPTRPQIRQKIENKPLQEPLSVNQIKTEPVDYEFKPIVVASGINCSTPLQNGVFSSGGQLQATSSPQGVVQAVVLPTVGLVSPISINLSDIQNVLKVAVDGNVIRQVLETNQASLASKEQEAVSASPIQQGGHSVISAISLPLVDQDGTTKIIINYSLEQPSQLQVVPQNLKKEIPAPTNSCKSEKLPEDLTVKSETDKSFEGARDDSTCLLCEDCPGDLNALPELKHYDPECPAQPPPPAPATEKPESSASSAGNGDLSPSQPPLKNLLSLLKAYYALNAQPSTEELSKIADSVNLPLDGVKKWFEKMQAGQIPGQSPDPPSPGTGSVNIPTKTDEQPQPADGNEPQEDSTRGQSPVKIRSSPVLPVGSAMNGSRSCTSSPSPLNLCSARNPQGYSCVAEGAQEEPQVEPLDLSLPKQQGELLERSTVSSVYQNSVYSVQEEPLNLSCAKKEPQKDSCVTDSEPVVNVVPPSANPINIAIPTVTAQLPTIVAIADQNSVPCLRALAANKQTILIPQVAYTYSATVSPAVQEPPVKVIQPNGNQDERQDTSSEGVSTVEDQNDSDSTPPKKKTRKTENGMYACDLCDKIFQKSSSLLRHKYEHTGKRPHECGICRKAFKHKHHLIEHMRLHSGEKPYQCDKCGKRFSHSGSYSQHMNHRYSYCKRGAEDRDAMEQEDAGPEVLPEVLATEHVGARASPSQADSDERESLTREEDEDSEKEEEEEDKEMEELQEGKECENPQGEEEEEEEEEEEEEEEEEEEVEADEAEHEAAAKTDGTVEVGAAQQAGSLEQKASESEMESESESEQLSEEKTNEA</sequence>
<evidence type="ECO:0000250" key="1"/>
<evidence type="ECO:0000250" key="2">
    <source>
        <dbReference type="UniProtKB" id="P37275"/>
    </source>
</evidence>
<evidence type="ECO:0000250" key="3">
    <source>
        <dbReference type="UniProtKB" id="Q62947"/>
    </source>
</evidence>
<evidence type="ECO:0000255" key="4">
    <source>
        <dbReference type="PROSITE-ProRule" id="PRU00042"/>
    </source>
</evidence>
<evidence type="ECO:0000256" key="5">
    <source>
        <dbReference type="SAM" id="MobiDB-lite"/>
    </source>
</evidence>
<evidence type="ECO:0000269" key="6">
    <source>
    </source>
</evidence>
<evidence type="ECO:0000269" key="7">
    <source>
    </source>
</evidence>
<evidence type="ECO:0000269" key="8">
    <source>
    </source>
</evidence>
<evidence type="ECO:0000303" key="9">
    <source>
    </source>
</evidence>
<evidence type="ECO:0000303" key="10">
    <source>
    </source>
</evidence>
<evidence type="ECO:0000305" key="11"/>
<evidence type="ECO:0000312" key="12">
    <source>
        <dbReference type="MGI" id="MGI:1344313"/>
    </source>
</evidence>
<evidence type="ECO:0007744" key="13">
    <source>
    </source>
</evidence>